<organism>
    <name type="scientific">Mycobacterium tuberculosis (strain ATCC 25618 / H37Rv)</name>
    <dbReference type="NCBI Taxonomy" id="83332"/>
    <lineage>
        <taxon>Bacteria</taxon>
        <taxon>Bacillati</taxon>
        <taxon>Actinomycetota</taxon>
        <taxon>Actinomycetes</taxon>
        <taxon>Mycobacteriales</taxon>
        <taxon>Mycobacteriaceae</taxon>
        <taxon>Mycobacterium</taxon>
        <taxon>Mycobacterium tuberculosis complex</taxon>
    </lineage>
</organism>
<keyword id="KW-0002">3D-structure</keyword>
<keyword id="KW-0067">ATP-binding</keyword>
<keyword id="KW-0068">Autocatalytic cleavage</keyword>
<keyword id="KW-0235">DNA replication</keyword>
<keyword id="KW-0238">DNA-binding</keyword>
<keyword id="KW-0255">Endonuclease</keyword>
<keyword id="KW-0347">Helicase</keyword>
<keyword id="KW-0378">Hydrolase</keyword>
<keyword id="KW-0404">Intron homing</keyword>
<keyword id="KW-0413">Isomerase</keyword>
<keyword id="KW-0540">Nuclease</keyword>
<keyword id="KW-0547">Nucleotide-binding</keyword>
<keyword id="KW-0639">Primosome</keyword>
<keyword id="KW-0651">Protein splicing</keyword>
<keyword id="KW-1185">Reference proteome</keyword>
<keyword id="KW-0677">Repeat</keyword>
<feature type="chain" id="PRO_0000013282" description="Replicative DNA helicase DnaB, 1st part">
    <location>
        <begin position="1"/>
        <end position="399"/>
    </location>
</feature>
<feature type="chain" id="PRO_0000013283" description="Endonuclease PI-MtuHIP">
    <location>
        <begin position="400"/>
        <end position="815"/>
    </location>
</feature>
<feature type="chain" id="PRO_0000013284" description="Replicative DNA helicase DnaB, 2nd part">
    <location>
        <begin position="816"/>
        <end position="874"/>
    </location>
</feature>
<feature type="domain" description="SF4 helicase; first part" evidence="4">
    <location>
        <begin position="195"/>
        <end position="462"/>
    </location>
</feature>
<feature type="domain" description="DOD-type homing endonuclease" evidence="3">
    <location>
        <begin position="582"/>
        <end position="660"/>
    </location>
</feature>
<feature type="domain" description="SF4 helicase; second part" evidence="4">
    <location>
        <begin position="612"/>
        <end position="874"/>
    </location>
</feature>
<feature type="region of interest" description="Disordered" evidence="5">
    <location>
        <begin position="1"/>
        <end position="25"/>
    </location>
</feature>
<feature type="binding site" evidence="4">
    <location>
        <begin position="226"/>
        <end position="233"/>
    </location>
    <ligand>
        <name>ATP</name>
        <dbReference type="ChEBI" id="CHEBI:30616"/>
    </ligand>
</feature>
<feature type="mutagenesis site" description="Loss of DNA helicase activity." evidence="8">
    <original>R</original>
    <variation>C</variation>
    <location>
        <position position="227"/>
    </location>
</feature>
<feature type="helix" evidence="14">
    <location>
        <begin position="28"/>
        <end position="40"/>
    </location>
</feature>
<feature type="helix" evidence="14">
    <location>
        <begin position="42"/>
        <end position="49"/>
    </location>
</feature>
<feature type="helix" evidence="14">
    <location>
        <begin position="60"/>
        <end position="74"/>
    </location>
</feature>
<feature type="helix" evidence="14">
    <location>
        <begin position="81"/>
        <end position="90"/>
    </location>
</feature>
<feature type="helix" evidence="14">
    <location>
        <begin position="94"/>
        <end position="97"/>
    </location>
</feature>
<feature type="helix" evidence="14">
    <location>
        <begin position="100"/>
        <end position="107"/>
    </location>
</feature>
<feature type="helix" evidence="14">
    <location>
        <begin position="113"/>
        <end position="115"/>
    </location>
</feature>
<feature type="helix" evidence="14">
    <location>
        <begin position="116"/>
        <end position="145"/>
    </location>
</feature>
<feature type="helix" evidence="14">
    <location>
        <begin position="152"/>
        <end position="164"/>
    </location>
</feature>
<sequence>MAVVDDLAPGMDSSPPSEDYGRQPPQDLAAEQSVLGGMLLSKDAIADVLERLRPGDFYRPAHQNVYDAILDLYGRGEPADAVTVAAELDRRGLLRRIGGAPYLHTLISTVPTAANAGYYASIVAEKALLRRLVEAGTRVVQYGYAGAEGADVAEVVDRAQAEIYDVADRRLSEDFVALEDLLQPTMDEIDAIASSGGLARGVATGFTELDEVTNGLHPGQMVIVAARPGVGKSTLGLDFMRSCSIRHRMASVIFSLEMSKSEIVMRLLSAEAKIKLSDMRSGRMSDDDWTRLARRMSEISEAPLFIDDSPNLTMMEIRAKARRLRQKANLKLIVVDYLQLMTSGKKYESRQVEVSEFSRHLKLLAKELEVPVVAISQLNRGPEQRTDKKPMLADLRESGCLTASTRILRADTGAEVAFGELMRSGERPMVWSLDERLRMVARPMINVFPSGRKEVFRLRLASGREVEATGSHPFMKFEGWTPLAQLKVGDRIAAPRRVPEPIDTQRMPESELISLARMIGDGSCLKNQPIRYEPVDEANLAAVTVSAAHSDRAAIRDDYLAARVPSLRPARQRLPRGRCTPIAAWLAGLGLFTKRSHEKCVPEAVFRAPNDQVALFLRHLWSAGGSVRWDPTNGQGRVYYGSTSRRLIDDVAQLLLRVGIFSWITHAPKLGGHDSWRLHIHGAKDQVRFLRHVGVHGAEAVAAQEMLRQLKGPVRNPNLDSAPKKVWAQVRNRLSAKQMMDIQLHEPTMWKHSPSRSRPHRAEARIEDRAIHELARGDAYWDTVVEITSIGDQHVFDGTVSGTHNFVANGISLHNSLEQDADVVILLHRPDAFDRDDPRGGEADFILAKHRNGPTKTVTVAHQLHLSRFANMAR</sequence>
<evidence type="ECO:0000250" key="1"/>
<evidence type="ECO:0000250" key="2">
    <source>
        <dbReference type="UniProtKB" id="Q55418"/>
    </source>
</evidence>
<evidence type="ECO:0000255" key="3">
    <source>
        <dbReference type="PROSITE-ProRule" id="PRU00273"/>
    </source>
</evidence>
<evidence type="ECO:0000255" key="4">
    <source>
        <dbReference type="PROSITE-ProRule" id="PRU00596"/>
    </source>
</evidence>
<evidence type="ECO:0000256" key="5">
    <source>
        <dbReference type="SAM" id="MobiDB-lite"/>
    </source>
</evidence>
<evidence type="ECO:0000269" key="6">
    <source>
    </source>
</evidence>
<evidence type="ECO:0000269" key="7">
    <source>
    </source>
</evidence>
<evidence type="ECO:0000269" key="8">
    <source>
    </source>
</evidence>
<evidence type="ECO:0000269" key="9">
    <source>
    </source>
</evidence>
<evidence type="ECO:0000269" key="10">
    <source>
    </source>
</evidence>
<evidence type="ECO:0000305" key="11"/>
<evidence type="ECO:0000305" key="12">
    <source>
    </source>
</evidence>
<evidence type="ECO:0007744" key="13">
    <source>
        <dbReference type="PDB" id="2R5U"/>
    </source>
</evidence>
<evidence type="ECO:0007829" key="14">
    <source>
        <dbReference type="PDB" id="2R5U"/>
    </source>
</evidence>
<accession>P9WMR3</accession>
<accession>L0T2G0</accession>
<accession>P71715</accession>
<gene>
    <name type="primary">dnaB</name>
    <name type="ordered locus">Rv0058</name>
    <name type="ORF">MTCY21D4.21</name>
</gene>
<reference key="1">
    <citation type="journal article" date="1998" name="Nature">
        <title>Deciphering the biology of Mycobacterium tuberculosis from the complete genome sequence.</title>
        <authorList>
            <person name="Cole S.T."/>
            <person name="Brosch R."/>
            <person name="Parkhill J."/>
            <person name="Garnier T."/>
            <person name="Churcher C.M."/>
            <person name="Harris D.E."/>
            <person name="Gordon S.V."/>
            <person name="Eiglmeier K."/>
            <person name="Gas S."/>
            <person name="Barry C.E. III"/>
            <person name="Tekaia F."/>
            <person name="Badcock K."/>
            <person name="Basham D."/>
            <person name="Brown D."/>
            <person name="Chillingworth T."/>
            <person name="Connor R."/>
            <person name="Davies R.M."/>
            <person name="Devlin K."/>
            <person name="Feltwell T."/>
            <person name="Gentles S."/>
            <person name="Hamlin N."/>
            <person name="Holroyd S."/>
            <person name="Hornsby T."/>
            <person name="Jagels K."/>
            <person name="Krogh A."/>
            <person name="McLean J."/>
            <person name="Moule S."/>
            <person name="Murphy L.D."/>
            <person name="Oliver S."/>
            <person name="Osborne J."/>
            <person name="Quail M.A."/>
            <person name="Rajandream M.A."/>
            <person name="Rogers J."/>
            <person name="Rutter S."/>
            <person name="Seeger K."/>
            <person name="Skelton S."/>
            <person name="Squares S."/>
            <person name="Squares R."/>
            <person name="Sulston J.E."/>
            <person name="Taylor K."/>
            <person name="Whitehead S."/>
            <person name="Barrell B.G."/>
        </authorList>
    </citation>
    <scope>NUCLEOTIDE SEQUENCE [LARGE SCALE GENOMIC DNA]</scope>
    <source>
        <strain>ATCC 25618 / H37Rv</strain>
    </source>
</reference>
<reference key="2">
    <citation type="journal article" date="2008" name="BMC Syst. Biol.">
        <title>targetTB: a target identification pipeline for Mycobacterium tuberculosis through an interactome, reactome and genome-scale structural analysis.</title>
        <authorList>
            <person name="Raman K."/>
            <person name="Yeturu K."/>
            <person name="Chandra N."/>
        </authorList>
    </citation>
    <scope>IDENTIFICATION AS A DRUG TARGET [LARGE SCALE ANALYSIS]</scope>
</reference>
<reference key="3">
    <citation type="journal article" date="2014" name="FEBS J.">
        <title>Functional characterization of DnaB helicase and its modulation by single-stranded DNA binding protein in Mycobacterium tuberculosis.</title>
        <authorList>
            <person name="Zhang H."/>
            <person name="Zhang Z."/>
            <person name="Yang J."/>
            <person name="He Z.G."/>
        </authorList>
    </citation>
    <scope>FUNCTION AS A 5'-3' DNA HELICASE</scope>
    <scope>FUNCTION AS AN ATPASE</scope>
    <scope>CATALYTIC ACTIVITY</scope>
    <scope>ACTIVITY REGULATION</scope>
    <scope>INTERACTION WITH SSB</scope>
    <scope>MUTAGENESIS OF ARG-227</scope>
</reference>
<reference key="4">
    <citation type="journal article" date="2020" name="Mol. Microbiol.">
        <title>Depletion of the DarG antitoxin in Mycobacterium tuberculosis triggers the DNA-damage response and leads to cell death.</title>
        <authorList>
            <person name="Zaveri A."/>
            <person name="Wang R."/>
            <person name="Botella L."/>
            <person name="Sharma R."/>
            <person name="Zhu L."/>
            <person name="Wallach J.B."/>
            <person name="Song N."/>
            <person name="Jansen R.S."/>
            <person name="Rhee K.Y."/>
            <person name="Ehrt S."/>
            <person name="Schnappinger D."/>
        </authorList>
    </citation>
    <scope>SUBUNIT</scope>
    <source>
        <strain>H37Rv</strain>
    </source>
</reference>
<reference key="5">
    <citation type="journal article" date="2021" name="Nature">
        <title>Molecular basis for DarT ADP-ribosylation of a DNA base.</title>
        <authorList>
            <person name="Schuller M."/>
            <person name="Butler R.E."/>
            <person name="Ariza A."/>
            <person name="Tromans-Coia C."/>
            <person name="Jankevicius G."/>
            <person name="Claridge T.D.W."/>
            <person name="Kendall S.L."/>
            <person name="Goh S."/>
            <person name="Stewart G.R."/>
            <person name="Ahel I."/>
        </authorList>
    </citation>
    <scope>OPERON STRUCTURE</scope>
    <source>
        <strain>H37Rv</strain>
    </source>
</reference>
<reference evidence="13" key="6">
    <citation type="journal article" date="2008" name="FEBS J.">
        <title>Hexameric ring structure of the N-terminal domain of Mycobacterium tuberculosis DnaB helicase.</title>
        <authorList>
            <person name="Biswas T."/>
            <person name="Tsodikov O.V."/>
        </authorList>
    </citation>
    <scope>X-RAY CRYSTALLOGRAPHY (1.90 ANGSTROMS) OF 1-197</scope>
    <scope>SUBUNIT</scope>
    <scope>DOMAIN</scope>
    <source>
        <strain>H37Rv</strain>
    </source>
</reference>
<protein>
    <recommendedName>
        <fullName>Replicative DNA helicase DnaB</fullName>
        <ecNumber evidence="8">5.6.2.3</ecNumber>
    </recommendedName>
    <alternativeName>
        <fullName evidence="11">DNA 5'-3' helicase DnaB</fullName>
    </alternativeName>
    <component>
        <recommendedName>
            <fullName>Endonuclease PI-MtuHIP</fullName>
            <ecNumber evidence="2">3.1.-.-</ecNumber>
        </recommendedName>
        <alternativeName>
            <fullName>Mtu DnaB intein</fullName>
        </alternativeName>
    </component>
</protein>
<proteinExistence type="evidence at protein level"/>
<dbReference type="EC" id="5.6.2.3" evidence="8"/>
<dbReference type="EC" id="3.1.-.-" evidence="2"/>
<dbReference type="EMBL" id="AL123456">
    <property type="protein sequence ID" value="CCP42780.1"/>
    <property type="molecule type" value="Genomic_DNA"/>
</dbReference>
<dbReference type="PIR" id="B70914">
    <property type="entry name" value="B70914"/>
</dbReference>
<dbReference type="RefSeq" id="NP_214572.1">
    <property type="nucleotide sequence ID" value="NC_000962.3"/>
</dbReference>
<dbReference type="RefSeq" id="WP_003916208.1">
    <property type="nucleotide sequence ID" value="NZ_NVQJ01000005.1"/>
</dbReference>
<dbReference type="PDB" id="2R5U">
    <property type="method" value="X-ray"/>
    <property type="resolution" value="1.90 A"/>
    <property type="chains" value="A/B/C/D/E/F=1-197"/>
</dbReference>
<dbReference type="PDBsum" id="2R5U"/>
<dbReference type="SMR" id="P9WMR3"/>
<dbReference type="IntAct" id="P9WMR3">
    <property type="interactions" value="1"/>
</dbReference>
<dbReference type="MINT" id="P9WMR3"/>
<dbReference type="STRING" id="83332.Rv0058"/>
<dbReference type="ChEMBL" id="CHEMBL1741192"/>
<dbReference type="PaxDb" id="83332-Rv0058"/>
<dbReference type="DNASU" id="887009"/>
<dbReference type="GeneID" id="887009"/>
<dbReference type="KEGG" id="mtu:Rv0058"/>
<dbReference type="KEGG" id="mtv:RVBD_0058"/>
<dbReference type="TubercuList" id="Rv0058"/>
<dbReference type="eggNOG" id="COG0305">
    <property type="taxonomic scope" value="Bacteria"/>
</dbReference>
<dbReference type="eggNOG" id="COG1372">
    <property type="taxonomic scope" value="Bacteria"/>
</dbReference>
<dbReference type="InParanoid" id="P9WMR3"/>
<dbReference type="OrthoDB" id="9773982at2"/>
<dbReference type="PhylomeDB" id="P9WMR3"/>
<dbReference type="EvolutionaryTrace" id="P9WMR3"/>
<dbReference type="PRO" id="PR:P9WMR3"/>
<dbReference type="Proteomes" id="UP000001584">
    <property type="component" value="Chromosome"/>
</dbReference>
<dbReference type="GO" id="GO:0005829">
    <property type="term" value="C:cytosol"/>
    <property type="evidence" value="ECO:0007005"/>
    <property type="project" value="MTBBASE"/>
</dbReference>
<dbReference type="GO" id="GO:0009274">
    <property type="term" value="C:peptidoglycan-based cell wall"/>
    <property type="evidence" value="ECO:0007005"/>
    <property type="project" value="MTBBASE"/>
</dbReference>
<dbReference type="GO" id="GO:1990077">
    <property type="term" value="C:primosome complex"/>
    <property type="evidence" value="ECO:0007669"/>
    <property type="project" value="UniProtKB-KW"/>
</dbReference>
<dbReference type="GO" id="GO:0005524">
    <property type="term" value="F:ATP binding"/>
    <property type="evidence" value="ECO:0007669"/>
    <property type="project" value="UniProtKB-KW"/>
</dbReference>
<dbReference type="GO" id="GO:0016887">
    <property type="term" value="F:ATP hydrolysis activity"/>
    <property type="evidence" value="ECO:0007669"/>
    <property type="project" value="InterPro"/>
</dbReference>
<dbReference type="GO" id="GO:0003677">
    <property type="term" value="F:DNA binding"/>
    <property type="evidence" value="ECO:0007669"/>
    <property type="project" value="UniProtKB-KW"/>
</dbReference>
<dbReference type="GO" id="GO:0003678">
    <property type="term" value="F:DNA helicase activity"/>
    <property type="evidence" value="ECO:0000318"/>
    <property type="project" value="GO_Central"/>
</dbReference>
<dbReference type="GO" id="GO:0004519">
    <property type="term" value="F:endonuclease activity"/>
    <property type="evidence" value="ECO:0007669"/>
    <property type="project" value="UniProtKB-KW"/>
</dbReference>
<dbReference type="GO" id="GO:0006974">
    <property type="term" value="P:DNA damage response"/>
    <property type="evidence" value="ECO:0000270"/>
    <property type="project" value="MTBBASE"/>
</dbReference>
<dbReference type="GO" id="GO:0006260">
    <property type="term" value="P:DNA replication"/>
    <property type="evidence" value="ECO:0000318"/>
    <property type="project" value="GO_Central"/>
</dbReference>
<dbReference type="GO" id="GO:0006269">
    <property type="term" value="P:DNA replication, synthesis of primer"/>
    <property type="evidence" value="ECO:0007669"/>
    <property type="project" value="UniProtKB-KW"/>
</dbReference>
<dbReference type="GO" id="GO:0016539">
    <property type="term" value="P:intein-mediated protein splicing"/>
    <property type="evidence" value="ECO:0007669"/>
    <property type="project" value="InterPro"/>
</dbReference>
<dbReference type="GO" id="GO:0006314">
    <property type="term" value="P:intron homing"/>
    <property type="evidence" value="ECO:0007669"/>
    <property type="project" value="UniProtKB-KW"/>
</dbReference>
<dbReference type="CDD" id="cd00984">
    <property type="entry name" value="DnaB_C"/>
    <property type="match status" value="1"/>
</dbReference>
<dbReference type="CDD" id="cd00081">
    <property type="entry name" value="Hint"/>
    <property type="match status" value="2"/>
</dbReference>
<dbReference type="FunFam" id="1.10.860.10:FF:000001">
    <property type="entry name" value="Replicative DNA helicase"/>
    <property type="match status" value="1"/>
</dbReference>
<dbReference type="FunFam" id="3.40.50.300:FF:001469">
    <property type="entry name" value="Replicative DNA helicase"/>
    <property type="match status" value="1"/>
</dbReference>
<dbReference type="FunFam" id="3.40.50.300:FF:002029">
    <property type="entry name" value="Replicative DNA helicase"/>
    <property type="match status" value="1"/>
</dbReference>
<dbReference type="Gene3D" id="1.10.860.10">
    <property type="entry name" value="DNAb Helicase, Chain A"/>
    <property type="match status" value="1"/>
</dbReference>
<dbReference type="Gene3D" id="2.170.16.10">
    <property type="entry name" value="Hedgehog/Intein (Hint) domain"/>
    <property type="match status" value="2"/>
</dbReference>
<dbReference type="Gene3D" id="3.10.28.10">
    <property type="entry name" value="Homing endonucleases"/>
    <property type="match status" value="1"/>
</dbReference>
<dbReference type="Gene3D" id="3.40.50.300">
    <property type="entry name" value="P-loop containing nucleotide triphosphate hydrolases"/>
    <property type="match status" value="2"/>
</dbReference>
<dbReference type="InterPro" id="IPR003593">
    <property type="entry name" value="AAA+_ATPase"/>
</dbReference>
<dbReference type="InterPro" id="IPR036185">
    <property type="entry name" value="DNA_heli_DnaB-like_N_sf"/>
</dbReference>
<dbReference type="InterPro" id="IPR007692">
    <property type="entry name" value="DNA_helicase_DnaB"/>
</dbReference>
<dbReference type="InterPro" id="IPR007694">
    <property type="entry name" value="DNA_helicase_DnaB-like_C"/>
</dbReference>
<dbReference type="InterPro" id="IPR007693">
    <property type="entry name" value="DNA_helicase_DnaB-like_N"/>
</dbReference>
<dbReference type="InterPro" id="IPR016136">
    <property type="entry name" value="DNA_helicase_N/primase_C"/>
</dbReference>
<dbReference type="InterPro" id="IPR003586">
    <property type="entry name" value="Hint_dom_C"/>
</dbReference>
<dbReference type="InterPro" id="IPR003587">
    <property type="entry name" value="Hint_dom_N"/>
</dbReference>
<dbReference type="InterPro" id="IPR036844">
    <property type="entry name" value="Hint_dom_sf"/>
</dbReference>
<dbReference type="InterPro" id="IPR027434">
    <property type="entry name" value="Homing_endonucl"/>
</dbReference>
<dbReference type="InterPro" id="IPR006142">
    <property type="entry name" value="INTEIN"/>
</dbReference>
<dbReference type="InterPro" id="IPR030934">
    <property type="entry name" value="Intein_C"/>
</dbReference>
<dbReference type="InterPro" id="IPR004042">
    <property type="entry name" value="Intein_endonuc_central"/>
</dbReference>
<dbReference type="InterPro" id="IPR006141">
    <property type="entry name" value="Intein_N"/>
</dbReference>
<dbReference type="InterPro" id="IPR004860">
    <property type="entry name" value="LAGLIDADG_dom"/>
</dbReference>
<dbReference type="InterPro" id="IPR027417">
    <property type="entry name" value="P-loop_NTPase"/>
</dbReference>
<dbReference type="NCBIfam" id="TIGR00665">
    <property type="entry name" value="DnaB"/>
    <property type="match status" value="1"/>
</dbReference>
<dbReference type="NCBIfam" id="TIGR01443">
    <property type="entry name" value="intein_Cterm"/>
    <property type="match status" value="1"/>
</dbReference>
<dbReference type="NCBIfam" id="TIGR01445">
    <property type="entry name" value="intein_Nterm"/>
    <property type="match status" value="1"/>
</dbReference>
<dbReference type="NCBIfam" id="NF005852">
    <property type="entry name" value="PRK07773.1"/>
    <property type="match status" value="1"/>
</dbReference>
<dbReference type="PANTHER" id="PTHR30153:SF2">
    <property type="entry name" value="REPLICATIVE DNA HELICASE"/>
    <property type="match status" value="1"/>
</dbReference>
<dbReference type="PANTHER" id="PTHR30153">
    <property type="entry name" value="REPLICATIVE DNA HELICASE DNAB"/>
    <property type="match status" value="1"/>
</dbReference>
<dbReference type="Pfam" id="PF00772">
    <property type="entry name" value="DnaB"/>
    <property type="match status" value="1"/>
</dbReference>
<dbReference type="Pfam" id="PF03796">
    <property type="entry name" value="DnaB_C"/>
    <property type="match status" value="2"/>
</dbReference>
<dbReference type="Pfam" id="PF14890">
    <property type="entry name" value="Intein_splicing"/>
    <property type="match status" value="1"/>
</dbReference>
<dbReference type="Pfam" id="PF14528">
    <property type="entry name" value="LAGLIDADG_3"/>
    <property type="match status" value="1"/>
</dbReference>
<dbReference type="PRINTS" id="PR00379">
    <property type="entry name" value="INTEIN"/>
</dbReference>
<dbReference type="SMART" id="SM00382">
    <property type="entry name" value="AAA"/>
    <property type="match status" value="1"/>
</dbReference>
<dbReference type="SMART" id="SM00305">
    <property type="entry name" value="HintC"/>
    <property type="match status" value="1"/>
</dbReference>
<dbReference type="SMART" id="SM00306">
    <property type="entry name" value="HintN"/>
    <property type="match status" value="1"/>
</dbReference>
<dbReference type="SUPFAM" id="SSF51294">
    <property type="entry name" value="Hedgehog/intein (Hint) domain"/>
    <property type="match status" value="1"/>
</dbReference>
<dbReference type="SUPFAM" id="SSF55608">
    <property type="entry name" value="Homing endonucleases"/>
    <property type="match status" value="1"/>
</dbReference>
<dbReference type="SUPFAM" id="SSF48024">
    <property type="entry name" value="N-terminal domain of DnaB helicase"/>
    <property type="match status" value="1"/>
</dbReference>
<dbReference type="SUPFAM" id="SSF52540">
    <property type="entry name" value="P-loop containing nucleoside triphosphate hydrolases"/>
    <property type="match status" value="1"/>
</dbReference>
<dbReference type="PROSITE" id="PS50818">
    <property type="entry name" value="INTEIN_C_TER"/>
    <property type="match status" value="1"/>
</dbReference>
<dbReference type="PROSITE" id="PS50819">
    <property type="entry name" value="INTEIN_ENDONUCLEASE"/>
    <property type="match status" value="1"/>
</dbReference>
<dbReference type="PROSITE" id="PS50817">
    <property type="entry name" value="INTEIN_N_TER"/>
    <property type="match status" value="1"/>
</dbReference>
<dbReference type="PROSITE" id="PS51199">
    <property type="entry name" value="SF4_HELICASE"/>
    <property type="match status" value="2"/>
</dbReference>
<name>DNAB_MYCTU</name>
<comment type="function">
    <text evidence="1 8">The main replicative DNA helicase, it participates in initiation and elongation during chromosome replication. Travels ahead of the DNA replisome, separating dsDNA into templates for DNA synthesis. A 5'-3' DNA helicase with DNA-dependent ATPase activity; helicase is equally active with ATP and dATP (PubMed:24387047). Requires single-stranded (ss)DNA for helicase activity (PubMed:24387047).</text>
</comment>
<comment type="function">
    <text evidence="2">The intein is an endonuclease.</text>
</comment>
<comment type="catalytic activity">
    <reaction evidence="8">
        <text>Couples ATP hydrolysis with the unwinding of duplex DNA at the replication fork by translocating in the 5'-3' direction. This creates two antiparallel DNA single strands (ssDNA). The leading ssDNA polymer is the template for DNA polymerase III holoenzyme which synthesizes a continuous strand.</text>
        <dbReference type="EC" id="5.6.2.3"/>
    </reaction>
</comment>
<comment type="catalytic activity">
    <reaction evidence="8">
        <text>ATP + H2O = ADP + phosphate + H(+)</text>
        <dbReference type="Rhea" id="RHEA:13065"/>
        <dbReference type="ChEBI" id="CHEBI:15377"/>
        <dbReference type="ChEBI" id="CHEBI:15378"/>
        <dbReference type="ChEBI" id="CHEBI:30616"/>
        <dbReference type="ChEBI" id="CHEBI:43474"/>
        <dbReference type="ChEBI" id="CHEBI:456216"/>
        <dbReference type="EC" id="5.6.2.3"/>
    </reaction>
</comment>
<comment type="activity regulation">
    <text evidence="8">In vitro 5'-3' helicase activity is stimulated by single-stranded binding protein (SSB, Rv0054) at low concentrations (0.02 to 0.16 uM), decreases at intermediate concentrations (0.32 to 0.64 uM), and is inhibited at higher concentrations (PubMed:24387047).</text>
</comment>
<comment type="subunit">
    <text evidence="8 9 12">Homohexamer (Probable) (PubMed:18479467). Interacts with single-stranded binding protein (SSB, Rv0054) (PubMed:24387047). Co-immunoprecipitates with DarG in the presence and absence of darT.</text>
</comment>
<comment type="interaction">
    <interactant intactId="EBI-9081402">
        <id>P9WMR3</id>
    </interactant>
    <interactant intactId="EBI-9081374">
        <id>P9WGD5</id>
        <label>ssb</label>
    </interactant>
    <organismsDiffer>false</organismsDiffer>
    <experiments>3</experiments>
</comment>
<comment type="induction">
    <text evidence="10">Part of the dnaB-darT-darG operon.</text>
</comment>
<comment type="domain">
    <text evidence="6">Residues 135-197 are required for dimerization of a 1-197 fragment (PubMed:18479467).</text>
</comment>
<comment type="PTM">
    <text evidence="2">This protein undergoes a protein self splicing that involves a post-translational excision of the intervening region (intein) followed by peptide ligation.</text>
</comment>
<comment type="miscellaneous">
    <text evidence="7">Was identified as a high-confidence drug target.</text>
</comment>
<comment type="similarity">
    <text evidence="11">Belongs to the helicase family. DnaB subfamily.</text>
</comment>